<name>RLMH_CAMC1</name>
<proteinExistence type="inferred from homology"/>
<reference key="1">
    <citation type="submission" date="2007-10" db="EMBL/GenBank/DDBJ databases">
        <title>Genome sequence of Campylobacter concisus 13826 isolated from human feces.</title>
        <authorList>
            <person name="Fouts D.E."/>
            <person name="Mongodin E.F."/>
            <person name="Puiu D."/>
            <person name="Sebastian Y."/>
            <person name="Miller W.G."/>
            <person name="Mandrell R.E."/>
            <person name="On S."/>
            <person name="Nelson K.E."/>
        </authorList>
    </citation>
    <scope>NUCLEOTIDE SEQUENCE [LARGE SCALE GENOMIC DNA]</scope>
    <source>
        <strain>13826</strain>
    </source>
</reference>
<dbReference type="EC" id="2.1.1.177" evidence="1"/>
<dbReference type="EMBL" id="CP000792">
    <property type="protein sequence ID" value="EAT97449.1"/>
    <property type="molecule type" value="Genomic_DNA"/>
</dbReference>
<dbReference type="RefSeq" id="WP_012001350.1">
    <property type="nucleotide sequence ID" value="NC_009802.2"/>
</dbReference>
<dbReference type="SMR" id="A7ZC60"/>
<dbReference type="STRING" id="360104.CCC13826_0940"/>
<dbReference type="KEGG" id="cco:CCC13826_0940"/>
<dbReference type="eggNOG" id="COG1576">
    <property type="taxonomic scope" value="Bacteria"/>
</dbReference>
<dbReference type="HOGENOM" id="CLU_100552_2_1_7"/>
<dbReference type="OrthoDB" id="9806643at2"/>
<dbReference type="Proteomes" id="UP000001121">
    <property type="component" value="Chromosome"/>
</dbReference>
<dbReference type="GO" id="GO:0005737">
    <property type="term" value="C:cytoplasm"/>
    <property type="evidence" value="ECO:0007669"/>
    <property type="project" value="UniProtKB-SubCell"/>
</dbReference>
<dbReference type="GO" id="GO:0070038">
    <property type="term" value="F:rRNA (pseudouridine-N3-)-methyltransferase activity"/>
    <property type="evidence" value="ECO:0007669"/>
    <property type="project" value="UniProtKB-UniRule"/>
</dbReference>
<dbReference type="CDD" id="cd18081">
    <property type="entry name" value="RlmH-like"/>
    <property type="match status" value="1"/>
</dbReference>
<dbReference type="Gene3D" id="3.40.1280.10">
    <property type="match status" value="1"/>
</dbReference>
<dbReference type="HAMAP" id="MF_00658">
    <property type="entry name" value="23SrRNA_methyltr_H"/>
    <property type="match status" value="1"/>
</dbReference>
<dbReference type="InterPro" id="IPR029028">
    <property type="entry name" value="Alpha/beta_knot_MTases"/>
</dbReference>
<dbReference type="InterPro" id="IPR003742">
    <property type="entry name" value="RlmH-like"/>
</dbReference>
<dbReference type="InterPro" id="IPR029026">
    <property type="entry name" value="tRNA_m1G_MTases_N"/>
</dbReference>
<dbReference type="PANTHER" id="PTHR33603">
    <property type="entry name" value="METHYLTRANSFERASE"/>
    <property type="match status" value="1"/>
</dbReference>
<dbReference type="PANTHER" id="PTHR33603:SF1">
    <property type="entry name" value="RIBOSOMAL RNA LARGE SUBUNIT METHYLTRANSFERASE H"/>
    <property type="match status" value="1"/>
</dbReference>
<dbReference type="Pfam" id="PF02590">
    <property type="entry name" value="SPOUT_MTase"/>
    <property type="match status" value="1"/>
</dbReference>
<dbReference type="PIRSF" id="PIRSF004505">
    <property type="entry name" value="MT_bac"/>
    <property type="match status" value="1"/>
</dbReference>
<dbReference type="SUPFAM" id="SSF75217">
    <property type="entry name" value="alpha/beta knot"/>
    <property type="match status" value="1"/>
</dbReference>
<gene>
    <name evidence="1" type="primary">rlmH</name>
    <name type="ordered locus">Ccon26_04670</name>
    <name type="ORF">CCC13826_0940</name>
</gene>
<protein>
    <recommendedName>
        <fullName evidence="1">Ribosomal RNA large subunit methyltransferase H</fullName>
        <ecNumber evidence="1">2.1.1.177</ecNumber>
    </recommendedName>
    <alternativeName>
        <fullName evidence="1">23S rRNA (pseudouridine1915-N3)-methyltransferase</fullName>
    </alternativeName>
    <alternativeName>
        <fullName evidence="1">23S rRNA m3Psi1915 methyltransferase</fullName>
    </alternativeName>
    <alternativeName>
        <fullName evidence="1">rRNA (pseudouridine-N3-)-methyltransferase RlmH</fullName>
    </alternativeName>
</protein>
<accession>A7ZC60</accession>
<feature type="chain" id="PRO_1000072703" description="Ribosomal RNA large subunit methyltransferase H">
    <location>
        <begin position="1"/>
        <end position="151"/>
    </location>
</feature>
<feature type="binding site" evidence="1">
    <location>
        <position position="73"/>
    </location>
    <ligand>
        <name>S-adenosyl-L-methionine</name>
        <dbReference type="ChEBI" id="CHEBI:59789"/>
    </ligand>
</feature>
<feature type="binding site" evidence="1">
    <location>
        <position position="100"/>
    </location>
    <ligand>
        <name>S-adenosyl-L-methionine</name>
        <dbReference type="ChEBI" id="CHEBI:59789"/>
    </ligand>
</feature>
<feature type="binding site" evidence="1">
    <location>
        <begin position="119"/>
        <end position="124"/>
    </location>
    <ligand>
        <name>S-adenosyl-L-methionine</name>
        <dbReference type="ChEBI" id="CHEBI:59789"/>
    </ligand>
</feature>
<keyword id="KW-0963">Cytoplasm</keyword>
<keyword id="KW-0489">Methyltransferase</keyword>
<keyword id="KW-0698">rRNA processing</keyword>
<keyword id="KW-0949">S-adenosyl-L-methionine</keyword>
<keyword id="KW-0808">Transferase</keyword>
<organism>
    <name type="scientific">Campylobacter concisus (strain 13826)</name>
    <dbReference type="NCBI Taxonomy" id="360104"/>
    <lineage>
        <taxon>Bacteria</taxon>
        <taxon>Pseudomonadati</taxon>
        <taxon>Campylobacterota</taxon>
        <taxon>Epsilonproteobacteria</taxon>
        <taxon>Campylobacterales</taxon>
        <taxon>Campylobacteraceae</taxon>
        <taxon>Campylobacter</taxon>
    </lineage>
</organism>
<comment type="function">
    <text evidence="1">Specifically methylates the pseudouridine at position 1915 (m3Psi1915) in 23S rRNA.</text>
</comment>
<comment type="catalytic activity">
    <reaction evidence="1">
        <text>pseudouridine(1915) in 23S rRNA + S-adenosyl-L-methionine = N(3)-methylpseudouridine(1915) in 23S rRNA + S-adenosyl-L-homocysteine + H(+)</text>
        <dbReference type="Rhea" id="RHEA:42752"/>
        <dbReference type="Rhea" id="RHEA-COMP:10221"/>
        <dbReference type="Rhea" id="RHEA-COMP:10222"/>
        <dbReference type="ChEBI" id="CHEBI:15378"/>
        <dbReference type="ChEBI" id="CHEBI:57856"/>
        <dbReference type="ChEBI" id="CHEBI:59789"/>
        <dbReference type="ChEBI" id="CHEBI:65314"/>
        <dbReference type="ChEBI" id="CHEBI:74486"/>
        <dbReference type="EC" id="2.1.1.177"/>
    </reaction>
</comment>
<comment type="subunit">
    <text evidence="1">Homodimer.</text>
</comment>
<comment type="subcellular location">
    <subcellularLocation>
        <location evidence="1">Cytoplasm</location>
    </subcellularLocation>
</comment>
<comment type="similarity">
    <text evidence="1">Belongs to the RNA methyltransferase RlmH family.</text>
</comment>
<sequence>MEISVFSIQKSSRDNFENEIQEYIKMSAKFAKINDKIIFNEKIARAQSSGRSDALRAYDEIYEPNLKGFCVMLDENGSQLDSQEFAQILNSNSQINFFIGGAYGLSQNLKDKAQKVVSLSKMTMAHKVAKLVLFEQIFRGLCINANHPYHK</sequence>
<evidence type="ECO:0000255" key="1">
    <source>
        <dbReference type="HAMAP-Rule" id="MF_00658"/>
    </source>
</evidence>